<sequence length="476" mass="53337">MNFETIIGLEVHVELKTNSKIFSASPTEFGADPNTQTSVIDLGYPGVLPTLNKEAVNFAMKAAMALNCEIATETKFDRKNYFYPDNPKAYQISQFDKPIGQNGWIEIEVGGQKKRIGITRLHLEEDAGKSTHTGEGYSLVDYNRQGLPLIEIVSEPDMRTPEEAYAYLEKLKSIIQYTGVSDCKMEEGSLRCDANISLRPVGQEKFGTKAELKNLNSFTYVQKGLEFEQARQEKELLSGGIIQQETRRYDEATKKTILMRVKEGSDDYRYFPEPDLVELYIDEEWKEQVRASIPELPDARKARYVAELGLPAYDAHVLTLTKEMSDFFEETVAGGADAKLASNWLMGEVLAYLNKQQKELKDVALTPAGLSKMIQLIEKGTISSKIAKKVFNELIEKGGDPEEIVKAKGLVQISDEGTLRKIVTEILDNNAQSIEDFKNGKDRAIGFLVGQIMKATKGQANPPLVNKILLEEINKR</sequence>
<dbReference type="EC" id="6.3.5.-" evidence="1"/>
<dbReference type="EMBL" id="CP000764">
    <property type="protein sequence ID" value="ABS20662.1"/>
    <property type="molecule type" value="Genomic_DNA"/>
</dbReference>
<dbReference type="RefSeq" id="WP_011983420.1">
    <property type="nucleotide sequence ID" value="NC_009674.1"/>
</dbReference>
<dbReference type="SMR" id="A7GKK4"/>
<dbReference type="STRING" id="315749.Bcer98_0299"/>
<dbReference type="GeneID" id="33895653"/>
<dbReference type="KEGG" id="bcy:Bcer98_0299"/>
<dbReference type="eggNOG" id="COG0064">
    <property type="taxonomic scope" value="Bacteria"/>
</dbReference>
<dbReference type="HOGENOM" id="CLU_019240_0_0_9"/>
<dbReference type="OrthoDB" id="9804078at2"/>
<dbReference type="Proteomes" id="UP000002300">
    <property type="component" value="Chromosome"/>
</dbReference>
<dbReference type="GO" id="GO:0050566">
    <property type="term" value="F:asparaginyl-tRNA synthase (glutamine-hydrolyzing) activity"/>
    <property type="evidence" value="ECO:0007669"/>
    <property type="project" value="RHEA"/>
</dbReference>
<dbReference type="GO" id="GO:0005524">
    <property type="term" value="F:ATP binding"/>
    <property type="evidence" value="ECO:0007669"/>
    <property type="project" value="UniProtKB-KW"/>
</dbReference>
<dbReference type="GO" id="GO:0050567">
    <property type="term" value="F:glutaminyl-tRNA synthase (glutamine-hydrolyzing) activity"/>
    <property type="evidence" value="ECO:0007669"/>
    <property type="project" value="UniProtKB-UniRule"/>
</dbReference>
<dbReference type="GO" id="GO:0070681">
    <property type="term" value="P:glutaminyl-tRNAGln biosynthesis via transamidation"/>
    <property type="evidence" value="ECO:0007669"/>
    <property type="project" value="TreeGrafter"/>
</dbReference>
<dbReference type="GO" id="GO:0006412">
    <property type="term" value="P:translation"/>
    <property type="evidence" value="ECO:0007669"/>
    <property type="project" value="UniProtKB-UniRule"/>
</dbReference>
<dbReference type="FunFam" id="1.10.10.410:FF:000001">
    <property type="entry name" value="Aspartyl/glutamyl-tRNA(Asn/Gln) amidotransferase subunit B"/>
    <property type="match status" value="1"/>
</dbReference>
<dbReference type="FunFam" id="1.10.150.380:FF:000001">
    <property type="entry name" value="Aspartyl/glutamyl-tRNA(Asn/Gln) amidotransferase subunit B"/>
    <property type="match status" value="1"/>
</dbReference>
<dbReference type="Gene3D" id="1.10.10.410">
    <property type="match status" value="1"/>
</dbReference>
<dbReference type="Gene3D" id="1.10.150.380">
    <property type="entry name" value="GatB domain, N-terminal subdomain"/>
    <property type="match status" value="1"/>
</dbReference>
<dbReference type="HAMAP" id="MF_00121">
    <property type="entry name" value="GatB"/>
    <property type="match status" value="1"/>
</dbReference>
<dbReference type="InterPro" id="IPR017959">
    <property type="entry name" value="Asn/Gln-tRNA_amidoTrfase_suB/E"/>
</dbReference>
<dbReference type="InterPro" id="IPR006075">
    <property type="entry name" value="Asn/Gln-tRNA_Trfase_suB/E_cat"/>
</dbReference>
<dbReference type="InterPro" id="IPR018027">
    <property type="entry name" value="Asn/Gln_amidotransferase"/>
</dbReference>
<dbReference type="InterPro" id="IPR003789">
    <property type="entry name" value="Asn/Gln_tRNA_amidoTrase-B-like"/>
</dbReference>
<dbReference type="InterPro" id="IPR004413">
    <property type="entry name" value="GatB"/>
</dbReference>
<dbReference type="InterPro" id="IPR042114">
    <property type="entry name" value="GatB_C_1"/>
</dbReference>
<dbReference type="InterPro" id="IPR023168">
    <property type="entry name" value="GatB_Yqey_C_2"/>
</dbReference>
<dbReference type="InterPro" id="IPR017958">
    <property type="entry name" value="Gln-tRNA_amidoTrfase_suB_CS"/>
</dbReference>
<dbReference type="InterPro" id="IPR014746">
    <property type="entry name" value="Gln_synth/guanido_kin_cat_dom"/>
</dbReference>
<dbReference type="NCBIfam" id="TIGR00133">
    <property type="entry name" value="gatB"/>
    <property type="match status" value="1"/>
</dbReference>
<dbReference type="NCBIfam" id="NF004011">
    <property type="entry name" value="PRK05477.1-1"/>
    <property type="match status" value="1"/>
</dbReference>
<dbReference type="NCBIfam" id="NF004012">
    <property type="entry name" value="PRK05477.1-2"/>
    <property type="match status" value="1"/>
</dbReference>
<dbReference type="NCBIfam" id="NF004014">
    <property type="entry name" value="PRK05477.1-4"/>
    <property type="match status" value="1"/>
</dbReference>
<dbReference type="PANTHER" id="PTHR11659">
    <property type="entry name" value="GLUTAMYL-TRNA GLN AMIDOTRANSFERASE SUBUNIT B MITOCHONDRIAL AND PROKARYOTIC PET112-RELATED"/>
    <property type="match status" value="1"/>
</dbReference>
<dbReference type="PANTHER" id="PTHR11659:SF0">
    <property type="entry name" value="GLUTAMYL-TRNA(GLN) AMIDOTRANSFERASE SUBUNIT B, MITOCHONDRIAL"/>
    <property type="match status" value="1"/>
</dbReference>
<dbReference type="Pfam" id="PF02934">
    <property type="entry name" value="GatB_N"/>
    <property type="match status" value="1"/>
</dbReference>
<dbReference type="Pfam" id="PF02637">
    <property type="entry name" value="GatB_Yqey"/>
    <property type="match status" value="1"/>
</dbReference>
<dbReference type="SMART" id="SM00845">
    <property type="entry name" value="GatB_Yqey"/>
    <property type="match status" value="1"/>
</dbReference>
<dbReference type="SUPFAM" id="SSF89095">
    <property type="entry name" value="GatB/YqeY motif"/>
    <property type="match status" value="1"/>
</dbReference>
<dbReference type="SUPFAM" id="SSF55931">
    <property type="entry name" value="Glutamine synthetase/guanido kinase"/>
    <property type="match status" value="1"/>
</dbReference>
<dbReference type="PROSITE" id="PS01234">
    <property type="entry name" value="GATB"/>
    <property type="match status" value="1"/>
</dbReference>
<accession>A7GKK4</accession>
<gene>
    <name evidence="1" type="primary">gatB</name>
    <name type="ordered locus">Bcer98_0299</name>
</gene>
<organism>
    <name type="scientific">Bacillus cytotoxicus (strain DSM 22905 / CIP 110041 / 391-98 / NVH 391-98)</name>
    <dbReference type="NCBI Taxonomy" id="315749"/>
    <lineage>
        <taxon>Bacteria</taxon>
        <taxon>Bacillati</taxon>
        <taxon>Bacillota</taxon>
        <taxon>Bacilli</taxon>
        <taxon>Bacillales</taxon>
        <taxon>Bacillaceae</taxon>
        <taxon>Bacillus</taxon>
        <taxon>Bacillus cereus group</taxon>
    </lineage>
</organism>
<reference key="1">
    <citation type="journal article" date="2008" name="Chem. Biol. Interact.">
        <title>Extending the Bacillus cereus group genomics to putative food-borne pathogens of different toxicity.</title>
        <authorList>
            <person name="Lapidus A."/>
            <person name="Goltsman E."/>
            <person name="Auger S."/>
            <person name="Galleron N."/>
            <person name="Segurens B."/>
            <person name="Dossat C."/>
            <person name="Land M.L."/>
            <person name="Broussolle V."/>
            <person name="Brillard J."/>
            <person name="Guinebretiere M.-H."/>
            <person name="Sanchis V."/>
            <person name="Nguen-the C."/>
            <person name="Lereclus D."/>
            <person name="Richardson P."/>
            <person name="Wincker P."/>
            <person name="Weissenbach J."/>
            <person name="Ehrlich S.D."/>
            <person name="Sorokin A."/>
        </authorList>
    </citation>
    <scope>NUCLEOTIDE SEQUENCE [LARGE SCALE GENOMIC DNA]</scope>
    <source>
        <strain>DSM 22905 / CIP 110041 / 391-98 / NVH 391-98</strain>
    </source>
</reference>
<proteinExistence type="inferred from homology"/>
<protein>
    <recommendedName>
        <fullName evidence="1">Aspartyl/glutamyl-tRNA(Asn/Gln) amidotransferase subunit B</fullName>
        <shortName evidence="1">Asp/Glu-ADT subunit B</shortName>
        <ecNumber evidence="1">6.3.5.-</ecNumber>
    </recommendedName>
</protein>
<evidence type="ECO:0000255" key="1">
    <source>
        <dbReference type="HAMAP-Rule" id="MF_00121"/>
    </source>
</evidence>
<feature type="chain" id="PRO_1000076149" description="Aspartyl/glutamyl-tRNA(Asn/Gln) amidotransferase subunit B">
    <location>
        <begin position="1"/>
        <end position="476"/>
    </location>
</feature>
<name>GATB_BACCN</name>
<comment type="function">
    <text evidence="1">Allows the formation of correctly charged Asn-tRNA(Asn) or Gln-tRNA(Gln) through the transamidation of misacylated Asp-tRNA(Asn) or Glu-tRNA(Gln) in organisms which lack either or both of asparaginyl-tRNA or glutaminyl-tRNA synthetases. The reaction takes place in the presence of glutamine and ATP through an activated phospho-Asp-tRNA(Asn) or phospho-Glu-tRNA(Gln).</text>
</comment>
<comment type="catalytic activity">
    <reaction evidence="1">
        <text>L-glutamyl-tRNA(Gln) + L-glutamine + ATP + H2O = L-glutaminyl-tRNA(Gln) + L-glutamate + ADP + phosphate + H(+)</text>
        <dbReference type="Rhea" id="RHEA:17521"/>
        <dbReference type="Rhea" id="RHEA-COMP:9681"/>
        <dbReference type="Rhea" id="RHEA-COMP:9684"/>
        <dbReference type="ChEBI" id="CHEBI:15377"/>
        <dbReference type="ChEBI" id="CHEBI:15378"/>
        <dbReference type="ChEBI" id="CHEBI:29985"/>
        <dbReference type="ChEBI" id="CHEBI:30616"/>
        <dbReference type="ChEBI" id="CHEBI:43474"/>
        <dbReference type="ChEBI" id="CHEBI:58359"/>
        <dbReference type="ChEBI" id="CHEBI:78520"/>
        <dbReference type="ChEBI" id="CHEBI:78521"/>
        <dbReference type="ChEBI" id="CHEBI:456216"/>
    </reaction>
</comment>
<comment type="catalytic activity">
    <reaction evidence="1">
        <text>L-aspartyl-tRNA(Asn) + L-glutamine + ATP + H2O = L-asparaginyl-tRNA(Asn) + L-glutamate + ADP + phosphate + 2 H(+)</text>
        <dbReference type="Rhea" id="RHEA:14513"/>
        <dbReference type="Rhea" id="RHEA-COMP:9674"/>
        <dbReference type="Rhea" id="RHEA-COMP:9677"/>
        <dbReference type="ChEBI" id="CHEBI:15377"/>
        <dbReference type="ChEBI" id="CHEBI:15378"/>
        <dbReference type="ChEBI" id="CHEBI:29985"/>
        <dbReference type="ChEBI" id="CHEBI:30616"/>
        <dbReference type="ChEBI" id="CHEBI:43474"/>
        <dbReference type="ChEBI" id="CHEBI:58359"/>
        <dbReference type="ChEBI" id="CHEBI:78515"/>
        <dbReference type="ChEBI" id="CHEBI:78516"/>
        <dbReference type="ChEBI" id="CHEBI:456216"/>
    </reaction>
</comment>
<comment type="subunit">
    <text evidence="1">Heterotrimer of A, B and C subunits.</text>
</comment>
<comment type="similarity">
    <text evidence="1">Belongs to the GatB/GatE family. GatB subfamily.</text>
</comment>
<keyword id="KW-0067">ATP-binding</keyword>
<keyword id="KW-0436">Ligase</keyword>
<keyword id="KW-0547">Nucleotide-binding</keyword>
<keyword id="KW-0648">Protein biosynthesis</keyword>